<geneLocation type="chloroplast"/>
<organism>
    <name type="scientific">Oenothera argillicola</name>
    <name type="common">Appalachian evening primrose</name>
    <dbReference type="NCBI Taxonomy" id="3940"/>
    <lineage>
        <taxon>Eukaryota</taxon>
        <taxon>Viridiplantae</taxon>
        <taxon>Streptophyta</taxon>
        <taxon>Embryophyta</taxon>
        <taxon>Tracheophyta</taxon>
        <taxon>Spermatophyta</taxon>
        <taxon>Magnoliopsida</taxon>
        <taxon>eudicotyledons</taxon>
        <taxon>Gunneridae</taxon>
        <taxon>Pentapetalae</taxon>
        <taxon>rosids</taxon>
        <taxon>malvids</taxon>
        <taxon>Myrtales</taxon>
        <taxon>Onagraceae</taxon>
        <taxon>Onagroideae</taxon>
        <taxon>Onagreae</taxon>
        <taxon>Oenothera</taxon>
    </lineage>
</organism>
<evidence type="ECO:0000255" key="1">
    <source>
        <dbReference type="HAMAP-Rule" id="MF_00808"/>
    </source>
</evidence>
<evidence type="ECO:0000305" key="2"/>
<dbReference type="EMBL" id="X55899">
    <property type="status" value="NOT_ANNOTATED_CDS"/>
    <property type="molecule type" value="Genomic_DNA"/>
</dbReference>
<dbReference type="EMBL" id="EU262887">
    <property type="protein sequence ID" value="ABW98731.1"/>
    <property type="molecule type" value="Genomic_DNA"/>
</dbReference>
<dbReference type="RefSeq" id="YP_001687164.1">
    <property type="nucleotide sequence ID" value="NC_010358.2"/>
</dbReference>
<dbReference type="SMR" id="P69672"/>
<dbReference type="GeneID" id="5951838"/>
<dbReference type="GO" id="GO:0009535">
    <property type="term" value="C:chloroplast thylakoid membrane"/>
    <property type="evidence" value="ECO:0007669"/>
    <property type="project" value="UniProtKB-SubCell"/>
</dbReference>
<dbReference type="GO" id="GO:0009539">
    <property type="term" value="C:photosystem II reaction center"/>
    <property type="evidence" value="ECO:0007669"/>
    <property type="project" value="InterPro"/>
</dbReference>
<dbReference type="GO" id="GO:0015979">
    <property type="term" value="P:photosynthesis"/>
    <property type="evidence" value="ECO:0007669"/>
    <property type="project" value="UniProtKB-UniRule"/>
</dbReference>
<dbReference type="HAMAP" id="MF_00808">
    <property type="entry name" value="PSII_PsbT"/>
    <property type="match status" value="1"/>
</dbReference>
<dbReference type="InterPro" id="IPR001743">
    <property type="entry name" value="PSII_PsbT"/>
</dbReference>
<dbReference type="InterPro" id="IPR037268">
    <property type="entry name" value="PSII_PsbT_sf"/>
</dbReference>
<dbReference type="PANTHER" id="PTHR36411">
    <property type="match status" value="1"/>
</dbReference>
<dbReference type="PANTHER" id="PTHR36411:SF2">
    <property type="entry name" value="PHOTOSYSTEM II REACTION CENTER PROTEIN T"/>
    <property type="match status" value="1"/>
</dbReference>
<dbReference type="Pfam" id="PF01405">
    <property type="entry name" value="PsbT"/>
    <property type="match status" value="1"/>
</dbReference>
<dbReference type="SUPFAM" id="SSF161029">
    <property type="entry name" value="Photosystem II reaction center protein T, PsbT"/>
    <property type="match status" value="1"/>
</dbReference>
<reference key="1">
    <citation type="journal article" date="1990" name="Nucleic Acids Res.">
        <title>Nucleotide sequences of psbB and psbH, the plastid encoded genes for CP47 and the 10 kDa phosphoprotein of photosystem II in Oenothera hookeri and argillicola.</title>
        <authorList>
            <person name="Offermann-Steinhard K."/>
            <person name="Herrmann R.G."/>
        </authorList>
    </citation>
    <scope>NUCLEOTIDE SEQUENCE [GENOMIC DNA]</scope>
</reference>
<reference key="2">
    <citation type="journal article" date="2008" name="Nucleic Acids Res.">
        <title>The complete nucleotide sequences of the five genetically distinct plastid genomes of Oenothera, subsection Oenothera: I. Sequence evaluation and plastome evolution.</title>
        <authorList>
            <person name="Greiner S."/>
            <person name="Wang X."/>
            <person name="Rauwolf U."/>
            <person name="Silber M.V."/>
            <person name="Mayer K."/>
            <person name="Meurer J."/>
            <person name="Haberer G."/>
            <person name="Herrmann R.G."/>
        </authorList>
    </citation>
    <scope>NUCLEOTIDE SEQUENCE [LARGE SCALE GENOMIC DNA]</scope>
    <source>
        <strain>cv. Douthat 1</strain>
    </source>
</reference>
<comment type="function">
    <text evidence="1">Found at the monomer-monomer interface of the photosystem II (PS II) dimer, plays a role in assembly and dimerization of PSII. PSII is a light-driven water plastoquinone oxidoreductase, using light energy to abstract electrons from H(2)O, generating a proton gradient subsequently used for ATP formation.</text>
</comment>
<comment type="subunit">
    <text evidence="1">PSII is composed of 1 copy each of membrane proteins PsbA, PsbB, PsbC, PsbD, PsbE, PsbF, PsbH, PsbI, PsbJ, PsbK, PsbL, PsbM, PsbT, PsbY, PsbZ, Psb30/Ycf12, at least 3 peripheral proteins of the oxygen-evolving complex and a large number of cofactors. It forms dimeric complexes.</text>
</comment>
<comment type="subcellular location">
    <subcellularLocation>
        <location evidence="1">Plastid</location>
        <location evidence="1">Chloroplast thylakoid membrane</location>
        <topology evidence="1">Single-pass membrane protein</topology>
    </subcellularLocation>
</comment>
<comment type="similarity">
    <text evidence="1">Belongs to the PsbT family.</text>
</comment>
<feature type="chain" id="PRO_0000217960" description="Photosystem II reaction center protein T">
    <location>
        <begin position="1"/>
        <end position="35"/>
    </location>
</feature>
<feature type="transmembrane region" description="Helical" evidence="1">
    <location>
        <begin position="3"/>
        <end position="23"/>
    </location>
</feature>
<feature type="sequence conflict" description="In Ref. 1; X55899." evidence="2" ref="1">
    <original>KTK</original>
    <variation>RRNDF</variation>
    <location>
        <begin position="33"/>
        <end position="35"/>
    </location>
</feature>
<protein>
    <recommendedName>
        <fullName evidence="1">Photosystem II reaction center protein T</fullName>
        <shortName evidence="1">PSII-T</shortName>
    </recommendedName>
</protein>
<sequence>MEALVYTFLLVSTLGIIFFAIFFREPPKIQTKKTK</sequence>
<proteinExistence type="inferred from homology"/>
<accession>P69672</accession>
<accession>B0Z4Q3</accession>
<accession>P37258</accession>
<accession>Q9MTJ6</accession>
<keyword id="KW-0150">Chloroplast</keyword>
<keyword id="KW-0472">Membrane</keyword>
<keyword id="KW-0602">Photosynthesis</keyword>
<keyword id="KW-0604">Photosystem II</keyword>
<keyword id="KW-0934">Plastid</keyword>
<keyword id="KW-0793">Thylakoid</keyword>
<keyword id="KW-0812">Transmembrane</keyword>
<keyword id="KW-1133">Transmembrane helix</keyword>
<name>PSBT_OENAR</name>
<gene>
    <name evidence="1" type="primary">psbT</name>
    <name type="synonym">ycf8</name>
</gene>